<evidence type="ECO:0000255" key="1">
    <source>
        <dbReference type="HAMAP-Rule" id="MF_01551"/>
    </source>
</evidence>
<evidence type="ECO:0000305" key="2"/>
<gene>
    <name evidence="1" type="primary">rlmM</name>
    <name type="ordered locus">VV0881</name>
</gene>
<name>RLMM_VIBVY</name>
<sequence length="359" mass="41204">MLYCRQGFEKECAGEIQDKATQLEVYGFPRVFKNAGYVLFECYQDGDADKLARELDFNALIFARQMFAVAAEFTELPSEDRISPILAELGEIDAFPVCGDLRIETPDTNEAKELLKFCRKFTVPMRQALRGKGLLLAKENAKKPVFHLCFVASGHCFAGYSYSHNNSRFFMGIPRLKFPADAPSRSTLKLEEAFHVFIPREEWDTRLSSGMWAVDLGACPGGWTYQLVQRSMFVHCVDNGMMADSLMETGQIKHHMVDGFKFEPDRKNVTWLVCDMVEKPARVAHLMGEWLIKGWAKETIFNLKLPMKGRYDEVLQDIENLKTFLIENKVKFKLQAKHLYHDREEITVHIQVLSNISPH</sequence>
<proteinExistence type="inferred from homology"/>
<reference key="1">
    <citation type="journal article" date="2003" name="Genome Res.">
        <title>Comparative genome analysis of Vibrio vulnificus, a marine pathogen.</title>
        <authorList>
            <person name="Chen C.-Y."/>
            <person name="Wu K.-M."/>
            <person name="Chang Y.-C."/>
            <person name="Chang C.-H."/>
            <person name="Tsai H.-C."/>
            <person name="Liao T.-L."/>
            <person name="Liu Y.-M."/>
            <person name="Chen H.-J."/>
            <person name="Shen A.B.-T."/>
            <person name="Li J.-C."/>
            <person name="Su T.-L."/>
            <person name="Shao C.-P."/>
            <person name="Lee C.-T."/>
            <person name="Hor L.-I."/>
            <person name="Tsai S.-F."/>
        </authorList>
    </citation>
    <scope>NUCLEOTIDE SEQUENCE [LARGE SCALE GENOMIC DNA]</scope>
    <source>
        <strain>YJ016</strain>
    </source>
</reference>
<keyword id="KW-0963">Cytoplasm</keyword>
<keyword id="KW-0489">Methyltransferase</keyword>
<keyword id="KW-0698">rRNA processing</keyword>
<keyword id="KW-0949">S-adenosyl-L-methionine</keyword>
<keyword id="KW-0808">Transferase</keyword>
<comment type="function">
    <text evidence="1">Catalyzes the 2'-O-methylation at nucleotide C2498 in 23S rRNA.</text>
</comment>
<comment type="catalytic activity">
    <reaction evidence="1">
        <text>cytidine(2498) in 23S rRNA + S-adenosyl-L-methionine = 2'-O-methylcytidine(2498) in 23S rRNA + S-adenosyl-L-homocysteine + H(+)</text>
        <dbReference type="Rhea" id="RHEA:42788"/>
        <dbReference type="Rhea" id="RHEA-COMP:10244"/>
        <dbReference type="Rhea" id="RHEA-COMP:10245"/>
        <dbReference type="ChEBI" id="CHEBI:15378"/>
        <dbReference type="ChEBI" id="CHEBI:57856"/>
        <dbReference type="ChEBI" id="CHEBI:59789"/>
        <dbReference type="ChEBI" id="CHEBI:74495"/>
        <dbReference type="ChEBI" id="CHEBI:82748"/>
        <dbReference type="EC" id="2.1.1.186"/>
    </reaction>
</comment>
<comment type="subunit">
    <text evidence="1">Monomer.</text>
</comment>
<comment type="subcellular location">
    <subcellularLocation>
        <location evidence="1">Cytoplasm</location>
    </subcellularLocation>
</comment>
<comment type="similarity">
    <text evidence="1">Belongs to the class I-like SAM-binding methyltransferase superfamily. RNA methyltransferase RlmE family. RlmM subfamily.</text>
</comment>
<comment type="sequence caution" evidence="2">
    <conflict type="erroneous initiation">
        <sequence resource="EMBL-CDS" id="BAC93645"/>
    </conflict>
</comment>
<organism>
    <name type="scientific">Vibrio vulnificus (strain YJ016)</name>
    <dbReference type="NCBI Taxonomy" id="196600"/>
    <lineage>
        <taxon>Bacteria</taxon>
        <taxon>Pseudomonadati</taxon>
        <taxon>Pseudomonadota</taxon>
        <taxon>Gammaproteobacteria</taxon>
        <taxon>Vibrionales</taxon>
        <taxon>Vibrionaceae</taxon>
        <taxon>Vibrio</taxon>
    </lineage>
</organism>
<accession>Q7MN36</accession>
<feature type="chain" id="PRO_0000070432" description="Ribosomal RNA large subunit methyltransferase M">
    <location>
        <begin position="1"/>
        <end position="359"/>
    </location>
</feature>
<feature type="active site" description="Proton acceptor" evidence="1">
    <location>
        <position position="304"/>
    </location>
</feature>
<feature type="binding site" evidence="1">
    <location>
        <position position="186"/>
    </location>
    <ligand>
        <name>S-adenosyl-L-methionine</name>
        <dbReference type="ChEBI" id="CHEBI:59789"/>
    </ligand>
</feature>
<feature type="binding site" evidence="1">
    <location>
        <begin position="219"/>
        <end position="222"/>
    </location>
    <ligand>
        <name>S-adenosyl-L-methionine</name>
        <dbReference type="ChEBI" id="CHEBI:59789"/>
    </ligand>
</feature>
<feature type="binding site" evidence="1">
    <location>
        <position position="238"/>
    </location>
    <ligand>
        <name>S-adenosyl-L-methionine</name>
        <dbReference type="ChEBI" id="CHEBI:59789"/>
    </ligand>
</feature>
<feature type="binding site" evidence="1">
    <location>
        <position position="258"/>
    </location>
    <ligand>
        <name>S-adenosyl-L-methionine</name>
        <dbReference type="ChEBI" id="CHEBI:59789"/>
    </ligand>
</feature>
<feature type="binding site" evidence="1">
    <location>
        <position position="275"/>
    </location>
    <ligand>
        <name>S-adenosyl-L-methionine</name>
        <dbReference type="ChEBI" id="CHEBI:59789"/>
    </ligand>
</feature>
<protein>
    <recommendedName>
        <fullName evidence="1">Ribosomal RNA large subunit methyltransferase M</fullName>
        <ecNumber evidence="1">2.1.1.186</ecNumber>
    </recommendedName>
    <alternativeName>
        <fullName evidence="1">23S rRNA (cytidine2498-2'-O)-methyltransferase</fullName>
    </alternativeName>
    <alternativeName>
        <fullName evidence="1">23S rRNA 2'-O-ribose methyltransferase RlmM</fullName>
    </alternativeName>
</protein>
<dbReference type="EC" id="2.1.1.186" evidence="1"/>
<dbReference type="EMBL" id="BA000037">
    <property type="protein sequence ID" value="BAC93645.1"/>
    <property type="status" value="ALT_INIT"/>
    <property type="molecule type" value="Genomic_DNA"/>
</dbReference>
<dbReference type="SMR" id="Q7MN36"/>
<dbReference type="STRING" id="672.VV93_v1c08180"/>
<dbReference type="KEGG" id="vvy:VV0881"/>
<dbReference type="eggNOG" id="COG2933">
    <property type="taxonomic scope" value="Bacteria"/>
</dbReference>
<dbReference type="HOGENOM" id="CLU_043780_0_0_6"/>
<dbReference type="Proteomes" id="UP000002675">
    <property type="component" value="Chromosome I"/>
</dbReference>
<dbReference type="GO" id="GO:0005737">
    <property type="term" value="C:cytoplasm"/>
    <property type="evidence" value="ECO:0007669"/>
    <property type="project" value="UniProtKB-SubCell"/>
</dbReference>
<dbReference type="GO" id="GO:0008757">
    <property type="term" value="F:S-adenosylmethionine-dependent methyltransferase activity"/>
    <property type="evidence" value="ECO:0007669"/>
    <property type="project" value="UniProtKB-UniRule"/>
</dbReference>
<dbReference type="GO" id="GO:0032259">
    <property type="term" value="P:methylation"/>
    <property type="evidence" value="ECO:0007669"/>
    <property type="project" value="UniProtKB-KW"/>
</dbReference>
<dbReference type="GO" id="GO:0006364">
    <property type="term" value="P:rRNA processing"/>
    <property type="evidence" value="ECO:0007669"/>
    <property type="project" value="UniProtKB-UniRule"/>
</dbReference>
<dbReference type="Gene3D" id="3.30.2300.20">
    <property type="match status" value="1"/>
</dbReference>
<dbReference type="Gene3D" id="3.30.70.2810">
    <property type="match status" value="1"/>
</dbReference>
<dbReference type="Gene3D" id="3.40.50.150">
    <property type="entry name" value="Vaccinia Virus protein VP39"/>
    <property type="match status" value="1"/>
</dbReference>
<dbReference type="HAMAP" id="MF_01551">
    <property type="entry name" value="23SrRNA_methyltr_M"/>
    <property type="match status" value="1"/>
</dbReference>
<dbReference type="InterPro" id="IPR040739">
    <property type="entry name" value="RlmM_FDX"/>
</dbReference>
<dbReference type="InterPro" id="IPR048646">
    <property type="entry name" value="RlmM_THUMP-like"/>
</dbReference>
<dbReference type="InterPro" id="IPR002877">
    <property type="entry name" value="RNA_MeTrfase_FtsJ_dom"/>
</dbReference>
<dbReference type="InterPro" id="IPR011224">
    <property type="entry name" value="rRNA_MeTrfase_M"/>
</dbReference>
<dbReference type="InterPro" id="IPR029063">
    <property type="entry name" value="SAM-dependent_MTases_sf"/>
</dbReference>
<dbReference type="NCBIfam" id="NF008734">
    <property type="entry name" value="PRK11760.1"/>
    <property type="match status" value="1"/>
</dbReference>
<dbReference type="PANTHER" id="PTHR37524">
    <property type="entry name" value="RIBOSOMAL RNA LARGE SUBUNIT METHYLTRANSFERASE M"/>
    <property type="match status" value="1"/>
</dbReference>
<dbReference type="PANTHER" id="PTHR37524:SF2">
    <property type="entry name" value="RIBOSOMAL RNA METHYLTRANSFERASE FTSJ DOMAIN-CONTAINING PROTEIN"/>
    <property type="match status" value="1"/>
</dbReference>
<dbReference type="Pfam" id="PF01728">
    <property type="entry name" value="FtsJ"/>
    <property type="match status" value="1"/>
</dbReference>
<dbReference type="Pfam" id="PF18125">
    <property type="entry name" value="RlmM_FDX"/>
    <property type="match status" value="1"/>
</dbReference>
<dbReference type="Pfam" id="PF21239">
    <property type="entry name" value="RLMM_N"/>
    <property type="match status" value="1"/>
</dbReference>
<dbReference type="PIRSF" id="PIRSF028774">
    <property type="entry name" value="UCP028774"/>
    <property type="match status" value="1"/>
</dbReference>
<dbReference type="SUPFAM" id="SSF53335">
    <property type="entry name" value="S-adenosyl-L-methionine-dependent methyltransferases"/>
    <property type="match status" value="1"/>
</dbReference>